<protein>
    <recommendedName>
        <fullName>Protein U54</fullName>
    </recommendedName>
</protein>
<name>U54_ELHVK</name>
<organismHost>
    <name type="scientific">Elephas maximus</name>
    <name type="common">Indian elephant</name>
    <dbReference type="NCBI Taxonomy" id="9783"/>
</organismHost>
<organismHost>
    <name type="scientific">Loxodonta africana</name>
    <name type="common">African elephant</name>
    <dbReference type="NCBI Taxonomy" id="9785"/>
</organismHost>
<organismHost>
    <name type="scientific">Loxodonta cyclotis</name>
    <name type="common">African forest elephant</name>
    <dbReference type="NCBI Taxonomy" id="99490"/>
</organismHost>
<sequence>MITPLWFHVTQQPDGTYFNFIEIAVRLNGTLVNGISQTLLVPAKLWEHTGLGKIYVVGSMENKLDVDFCAVRYSDILGGFCMEVSNPHDEPLTFNHEVQRFILFSPQIYPISYQFQVLRPPSVSFPKCKANVSSDIIVHSLSDTYVFIKIQFNGITWEDPKKFDLPTGPLSGPFWMSYPVAVLNLPRKLYALHHYLLSRHTDTCDSENCYYTNYIVSRSCFHKRTLYLILTGIGTSKNACYAKDLLFCGIFSTSHVPEGDDIPQLDPAYNVHGESLLRDTLPIINPSAHCNTFQTFTHDTVALFAPDEWHSSLLNVAVWRPGKILTLPGTFVQNLPTDHKPIIPVGDAVFLVTQQLYAGHPNHIPARKIRALVSKTYLILFPLNLTFRLDELNPICFSEKPQSKLTLPQIDKHPSFDQDFLKNFSIDEMQLISQFFDSLRKMYTSNYVRTLTKRFHGNWNRWPSCRNHQFNQLLCAFYSF</sequence>
<organism>
    <name type="scientific">Elephantid herpesvirus 1 (isolate Asian elephant/Berlin/Kiba/1998)</name>
    <name type="common">EIHV-1</name>
    <name type="synonym">Elephant endotheliotropic herpesvirus</name>
    <dbReference type="NCBI Taxonomy" id="654902"/>
    <lineage>
        <taxon>Viruses</taxon>
        <taxon>Duplodnaviria</taxon>
        <taxon>Heunggongvirae</taxon>
        <taxon>Peploviricota</taxon>
        <taxon>Herviviricetes</taxon>
        <taxon>Herpesvirales</taxon>
        <taxon>Orthoherpesviridae</taxon>
        <taxon>Betaherpesvirinae</taxon>
        <taxon>Proboscivirus</taxon>
        <taxon>Proboscivirus elephantidbeta1</taxon>
        <taxon>Elephantid herpesvirus 1</taxon>
    </lineage>
</organism>
<proteinExistence type="predicted"/>
<dbReference type="EMBL" id="AF322977">
    <property type="protein sequence ID" value="ABG36577.1"/>
    <property type="molecule type" value="Genomic_DNA"/>
</dbReference>
<feature type="chain" id="PRO_0000408185" description="Protein U54">
    <location>
        <begin position="1"/>
        <end position="480"/>
    </location>
</feature>
<reference key="1">
    <citation type="journal article" date="2007" name="J. Virol.">
        <title>Identification of novel rodent herpesviruses, including the first gammaherpesvirus of Mus musculus.</title>
        <authorList>
            <person name="Ehlers B."/>
            <person name="Kuchler J."/>
            <person name="Yasmum N."/>
            <person name="Dural G."/>
            <person name="Voigt S."/>
            <person name="Schmidt-Chanasit J."/>
            <person name="Jakel T."/>
            <person name="Matuschka F.R."/>
            <person name="Richter D."/>
            <person name="Essbauer S."/>
            <person name="Hughes D.J."/>
            <person name="Summers C."/>
            <person name="Bennett M."/>
            <person name="Stewart J.P."/>
            <person name="Ulrich R.G."/>
        </authorList>
    </citation>
    <scope>NUCLEOTIDE SEQUENCE [GENOMIC DNA]</scope>
</reference>
<reference key="2">
    <citation type="journal article" date="2001" name="J. Gen. Virol.">
        <title>Genetic and ultrastructural characterization of a European isolate of the fatal endotheliotropic elephant herpesvirus.</title>
        <authorList>
            <person name="Ehlers B."/>
            <person name="Burkhardt S."/>
            <person name="Goltz M."/>
            <person name="Bergmann V."/>
            <person name="Ochs A."/>
            <person name="Weiler H."/>
            <person name="Hentschke J."/>
        </authorList>
    </citation>
    <scope>NUCLEOTIDE SEQUENCE [GENOMIC DNA]</scope>
</reference>
<accession>Q18LE2</accession>